<organism>
    <name type="scientific">Mus musculus</name>
    <name type="common">Mouse</name>
    <dbReference type="NCBI Taxonomy" id="10090"/>
    <lineage>
        <taxon>Eukaryota</taxon>
        <taxon>Metazoa</taxon>
        <taxon>Chordata</taxon>
        <taxon>Craniata</taxon>
        <taxon>Vertebrata</taxon>
        <taxon>Euteleostomi</taxon>
        <taxon>Mammalia</taxon>
        <taxon>Eutheria</taxon>
        <taxon>Euarchontoglires</taxon>
        <taxon>Glires</taxon>
        <taxon>Rodentia</taxon>
        <taxon>Myomorpha</taxon>
        <taxon>Muroidea</taxon>
        <taxon>Muridae</taxon>
        <taxon>Murinae</taxon>
        <taxon>Mus</taxon>
        <taxon>Mus</taxon>
    </lineage>
</organism>
<proteinExistence type="evidence at protein level"/>
<name>SO4C1_MOUSE</name>
<keyword id="KW-1003">Cell membrane</keyword>
<keyword id="KW-0217">Developmental protein</keyword>
<keyword id="KW-0221">Differentiation</keyword>
<keyword id="KW-1015">Disulfide bond</keyword>
<keyword id="KW-0406">Ion transport</keyword>
<keyword id="KW-0472">Membrane</keyword>
<keyword id="KW-0597">Phosphoprotein</keyword>
<keyword id="KW-1185">Reference proteome</keyword>
<keyword id="KW-0744">Spermatogenesis</keyword>
<keyword id="KW-0812">Transmembrane</keyword>
<keyword id="KW-1133">Transmembrane helix</keyword>
<keyword id="KW-0813">Transport</keyword>
<protein>
    <recommendedName>
        <fullName evidence="8">Solute carrier organic anion transporter family member 4C1</fullName>
        <shortName evidence="8">Slco4c1</shortName>
    </recommendedName>
    <alternativeName>
        <fullName>Oatp-R</fullName>
    </alternativeName>
    <alternativeName>
        <fullName>Organic anion transporting polypeptide 4C1</fullName>
        <shortName>OATP4C1</shortName>
    </alternativeName>
    <alternativeName>
        <fullName>Solute carrier family 21 member 20</fullName>
    </alternativeName>
</protein>
<sequence>MQGSKGIENPAFVPSSPGTPRRASASPSQVEVSAVASRNQNGGSQPRESEEPQKSTEPSPPSSNPPASDEPPGSQLSELEEGPCGWRGFHPQCLQRCNTPQGFLLHYCLLALTQGIVVNGLVNISISTIEKRYEMKSSLTGLISSSYDISFCVLSLFVSFFGERGHKPRWLAFASFMIGLGALVFSLPHFFSGRYELGSIFEDTCLTRNSTRCSSSTSLLSNYFYVFVLGQLLLGTGGTPLYTLGTAFIDDSVPTHKSSLYIGIGYSMSILGPAIGYVLGGQLLTMYIDIAMGQSSDLTEDDPRWLGAWWIGFLLAWLFAWSLIMPFSCFPKHLPGTAKIQAGKTSQTHQNNSTSFQHTDENFGKSIKDFPTAVKNLMRNTVFICLVLSTTSEALITTGFATFLPKFIENQFGLTSSFAATLGGAVLIPGAALGQILGGVLVSKFKMKCKNTMKFALCTSGVALVLSFVFIYAKCENEPFAGVSESYNGTGEMGNLTAPCNANCNCLRSYYYPLCGSDGIQYFSPCFAGCLNSVSNRKPKVYYNCSCIERKITSTAESTDFEAKAGKCRTRCSNLPIFLGIFFITVIFTFMAGTPITVSILRCVNHRHRSLALGVQFMLLRLLGTIPGPIIFGVIIDSTCVLWDVNECGIKGACWIYDNIKMAHMLVAISVTCKVITIFFNGLAIVLYKPPPPGTEVSFQSQNVIVSTISVEEDLDKAENEG</sequence>
<reference evidence="11" key="1">
    <citation type="submission" date="2004-06" db="EMBL/GenBank/DDBJ databases">
        <title>Mouse organic anion transporter oatp-R.</title>
        <authorList>
            <person name="Ishiyama K."/>
            <person name="Suzuki T."/>
            <person name="Mikkaichi T."/>
            <person name="Tanemoto M."/>
            <person name="Abe T."/>
        </authorList>
    </citation>
    <scope>NUCLEOTIDE SEQUENCE [MRNA]</scope>
    <source>
        <strain evidence="11">BALB/cJ</strain>
    </source>
</reference>
<reference evidence="12" key="2">
    <citation type="journal article" date="2005" name="Science">
        <title>The transcriptional landscape of the mammalian genome.</title>
        <authorList>
            <person name="Carninci P."/>
            <person name="Kasukawa T."/>
            <person name="Katayama S."/>
            <person name="Gough J."/>
            <person name="Frith M.C."/>
            <person name="Maeda N."/>
            <person name="Oyama R."/>
            <person name="Ravasi T."/>
            <person name="Lenhard B."/>
            <person name="Wells C."/>
            <person name="Kodzius R."/>
            <person name="Shimokawa K."/>
            <person name="Bajic V.B."/>
            <person name="Brenner S.E."/>
            <person name="Batalov S."/>
            <person name="Forrest A.R."/>
            <person name="Zavolan M."/>
            <person name="Davis M.J."/>
            <person name="Wilming L.G."/>
            <person name="Aidinis V."/>
            <person name="Allen J.E."/>
            <person name="Ambesi-Impiombato A."/>
            <person name="Apweiler R."/>
            <person name="Aturaliya R.N."/>
            <person name="Bailey T.L."/>
            <person name="Bansal M."/>
            <person name="Baxter L."/>
            <person name="Beisel K.W."/>
            <person name="Bersano T."/>
            <person name="Bono H."/>
            <person name="Chalk A.M."/>
            <person name="Chiu K.P."/>
            <person name="Choudhary V."/>
            <person name="Christoffels A."/>
            <person name="Clutterbuck D.R."/>
            <person name="Crowe M.L."/>
            <person name="Dalla E."/>
            <person name="Dalrymple B.P."/>
            <person name="de Bono B."/>
            <person name="Della Gatta G."/>
            <person name="di Bernardo D."/>
            <person name="Down T."/>
            <person name="Engstrom P."/>
            <person name="Fagiolini M."/>
            <person name="Faulkner G."/>
            <person name="Fletcher C.F."/>
            <person name="Fukushima T."/>
            <person name="Furuno M."/>
            <person name="Futaki S."/>
            <person name="Gariboldi M."/>
            <person name="Georgii-Hemming P."/>
            <person name="Gingeras T.R."/>
            <person name="Gojobori T."/>
            <person name="Green R.E."/>
            <person name="Gustincich S."/>
            <person name="Harbers M."/>
            <person name="Hayashi Y."/>
            <person name="Hensch T.K."/>
            <person name="Hirokawa N."/>
            <person name="Hill D."/>
            <person name="Huminiecki L."/>
            <person name="Iacono M."/>
            <person name="Ikeo K."/>
            <person name="Iwama A."/>
            <person name="Ishikawa T."/>
            <person name="Jakt M."/>
            <person name="Kanapin A."/>
            <person name="Katoh M."/>
            <person name="Kawasawa Y."/>
            <person name="Kelso J."/>
            <person name="Kitamura H."/>
            <person name="Kitano H."/>
            <person name="Kollias G."/>
            <person name="Krishnan S.P."/>
            <person name="Kruger A."/>
            <person name="Kummerfeld S.K."/>
            <person name="Kurochkin I.V."/>
            <person name="Lareau L.F."/>
            <person name="Lazarevic D."/>
            <person name="Lipovich L."/>
            <person name="Liu J."/>
            <person name="Liuni S."/>
            <person name="McWilliam S."/>
            <person name="Madan Babu M."/>
            <person name="Madera M."/>
            <person name="Marchionni L."/>
            <person name="Matsuda H."/>
            <person name="Matsuzawa S."/>
            <person name="Miki H."/>
            <person name="Mignone F."/>
            <person name="Miyake S."/>
            <person name="Morris K."/>
            <person name="Mottagui-Tabar S."/>
            <person name="Mulder N."/>
            <person name="Nakano N."/>
            <person name="Nakauchi H."/>
            <person name="Ng P."/>
            <person name="Nilsson R."/>
            <person name="Nishiguchi S."/>
            <person name="Nishikawa S."/>
            <person name="Nori F."/>
            <person name="Ohara O."/>
            <person name="Okazaki Y."/>
            <person name="Orlando V."/>
            <person name="Pang K.C."/>
            <person name="Pavan W.J."/>
            <person name="Pavesi G."/>
            <person name="Pesole G."/>
            <person name="Petrovsky N."/>
            <person name="Piazza S."/>
            <person name="Reed J."/>
            <person name="Reid J.F."/>
            <person name="Ring B.Z."/>
            <person name="Ringwald M."/>
            <person name="Rost B."/>
            <person name="Ruan Y."/>
            <person name="Salzberg S.L."/>
            <person name="Sandelin A."/>
            <person name="Schneider C."/>
            <person name="Schoenbach C."/>
            <person name="Sekiguchi K."/>
            <person name="Semple C.A."/>
            <person name="Seno S."/>
            <person name="Sessa L."/>
            <person name="Sheng Y."/>
            <person name="Shibata Y."/>
            <person name="Shimada H."/>
            <person name="Shimada K."/>
            <person name="Silva D."/>
            <person name="Sinclair B."/>
            <person name="Sperling S."/>
            <person name="Stupka E."/>
            <person name="Sugiura K."/>
            <person name="Sultana R."/>
            <person name="Takenaka Y."/>
            <person name="Taki K."/>
            <person name="Tammoja K."/>
            <person name="Tan S.L."/>
            <person name="Tang S."/>
            <person name="Taylor M.S."/>
            <person name="Tegner J."/>
            <person name="Teichmann S.A."/>
            <person name="Ueda H.R."/>
            <person name="van Nimwegen E."/>
            <person name="Verardo R."/>
            <person name="Wei C.L."/>
            <person name="Yagi K."/>
            <person name="Yamanishi H."/>
            <person name="Zabarovsky E."/>
            <person name="Zhu S."/>
            <person name="Zimmer A."/>
            <person name="Hide W."/>
            <person name="Bult C."/>
            <person name="Grimmond S.M."/>
            <person name="Teasdale R.D."/>
            <person name="Liu E.T."/>
            <person name="Brusic V."/>
            <person name="Quackenbush J."/>
            <person name="Wahlestedt C."/>
            <person name="Mattick J.S."/>
            <person name="Hume D.A."/>
            <person name="Kai C."/>
            <person name="Sasaki D."/>
            <person name="Tomaru Y."/>
            <person name="Fukuda S."/>
            <person name="Kanamori-Katayama M."/>
            <person name="Suzuki M."/>
            <person name="Aoki J."/>
            <person name="Arakawa T."/>
            <person name="Iida J."/>
            <person name="Imamura K."/>
            <person name="Itoh M."/>
            <person name="Kato T."/>
            <person name="Kawaji H."/>
            <person name="Kawagashira N."/>
            <person name="Kawashima T."/>
            <person name="Kojima M."/>
            <person name="Kondo S."/>
            <person name="Konno H."/>
            <person name="Nakano K."/>
            <person name="Ninomiya N."/>
            <person name="Nishio T."/>
            <person name="Okada M."/>
            <person name="Plessy C."/>
            <person name="Shibata K."/>
            <person name="Shiraki T."/>
            <person name="Suzuki S."/>
            <person name="Tagami M."/>
            <person name="Waki K."/>
            <person name="Watahiki A."/>
            <person name="Okamura-Oho Y."/>
            <person name="Suzuki H."/>
            <person name="Kawai J."/>
            <person name="Hayashizaki Y."/>
        </authorList>
    </citation>
    <scope>NUCLEOTIDE SEQUENCE [LARGE SCALE MRNA]</scope>
    <source>
        <strain evidence="12">C57BL/6J</strain>
        <tissue evidence="6">Embryonic stem cell</tissue>
        <tissue evidence="13">Hippocampus</tissue>
    </source>
</reference>
<reference evidence="10" key="3">
    <citation type="journal article" date="2004" name="Genome Res.">
        <title>The status, quality, and expansion of the NIH full-length cDNA project: the Mammalian Gene Collection (MGC).</title>
        <authorList>
            <consortium name="The MGC Project Team"/>
        </authorList>
    </citation>
    <scope>NUCLEOTIDE SEQUENCE [LARGE SCALE MRNA]</scope>
    <source>
        <tissue evidence="10">Brain</tissue>
    </source>
</reference>
<reference evidence="9" key="4">
    <citation type="journal article" date="2006" name="Biol. Reprod.">
        <title>Differential endocrine regulation of genes enriched in initial segment and distal caput of the mouse epididymis as revealed by genome-wide expression profiling.</title>
        <authorList>
            <person name="Sipila P."/>
            <person name="Pujianto D.A."/>
            <person name="Shariatmadari R."/>
            <person name="Nikkila J."/>
            <person name="Lehtoranta M."/>
            <person name="Huhtaniemi I.T."/>
            <person name="Poutanen M."/>
        </authorList>
    </citation>
    <scope>FUNCTION</scope>
    <scope>TISSUE SPECIFICITY</scope>
    <scope>INDUCTION</scope>
</reference>
<reference key="5">
    <citation type="journal article" date="2010" name="Cell">
        <title>A tissue-specific atlas of mouse protein phosphorylation and expression.</title>
        <authorList>
            <person name="Huttlin E.L."/>
            <person name="Jedrychowski M.P."/>
            <person name="Elias J.E."/>
            <person name="Goswami T."/>
            <person name="Rad R."/>
            <person name="Beausoleil S.A."/>
            <person name="Villen J."/>
            <person name="Haas W."/>
            <person name="Sowa M.E."/>
            <person name="Gygi S.P."/>
        </authorList>
    </citation>
    <scope>PHOSPHORYLATION [LARGE SCALE ANALYSIS] AT SER-16; THR-19; SER-24; SER-26 AND SER-28</scope>
    <scope>IDENTIFICATION BY MASS SPECTROMETRY [LARGE SCALE ANALYSIS]</scope>
    <source>
        <tissue>Kidney</tissue>
        <tissue>Lung</tissue>
        <tissue>Spleen</tissue>
    </source>
</reference>
<comment type="function">
    <text evidence="1 2 8">Mediates the transport of organic anions such as steroids (estrone 3-sulfate, chenodeoxycholate, glycocholate) and thyroid hormones (3,3',5-triiodo-L-thyronine (T3), L-thyroxine (T4)), in the kidney. Capable of transporting cAMP and pharmacological substances such as digoxin, ouabain and methotrexate. Transport is independent of sodium, chloride ion, and ATP. Transport activity is stimulated by an acidic extracellular environment due to increased substrate affinity to the transporter (By similarity). The driving force for this transport activity is currently not known (By similarity). The role of hydrogencarbonate (HCO3(-), bicarbonate) as the probable counteranion that exchanges for organic anions is still not well defined (By similarity). Functions as an uptake transporter at the apical membrane, suggesting a role in renal reabsorption (By similarity). Involved in the renal secretion of the uremic toxin ADMA (N(omega),N(omega)-dimethyl-L-arginine or asymmetrical dimethylarginine), which is associated to cardiovascular events and mortality, and the structurally related amino acids L-arginine and L-homoarginine (a cardioprotective biomarker). Can act bidirectionally, suggesting a dual protective role of this transport protein; exporting L-homoarginine after being synthesized in proximal tubule cells, and mediating uptake of ADMA from the blood into proximal tubule cells where it is degraded by the enzyme dimethylarginine dimethylaminohydrolase 1 (DDAH1) (By similarity). May be involved in sperm maturation by enabling directed movement of organic anions and compounds within or between cells (PubMed:16641146). This ion-transporting process is important to maintain the strict epididymal homeostasis necessary for sperm maturation (PubMed:16641146). May have a role in secretory functions since seminal vesicle epithelial cells are assumed to secrete proteins involved in decapacitation by modifying surface proteins to facilitate the acquisition of the ability to fertilize the egg (PubMed:16641146).</text>
</comment>
<comment type="catalytic activity">
    <reaction evidence="1">
        <text>estrone 3-sulfate(out) = estrone 3-sulfate(in)</text>
        <dbReference type="Rhea" id="RHEA:71835"/>
        <dbReference type="ChEBI" id="CHEBI:60050"/>
    </reaction>
</comment>
<comment type="catalytic activity">
    <reaction evidence="1">
        <text>L-thyroxine(out) = L-thyroxine(in)</text>
        <dbReference type="Rhea" id="RHEA:71819"/>
        <dbReference type="ChEBI" id="CHEBI:58448"/>
    </reaction>
</comment>
<comment type="catalytic activity">
    <reaction evidence="1">
        <text>3,3',5-triiodo-L-thyronine(out) = 3,3',5-triiodo-L-thyronine(in)</text>
        <dbReference type="Rhea" id="RHEA:71811"/>
        <dbReference type="ChEBI" id="CHEBI:533015"/>
    </reaction>
</comment>
<comment type="catalytic activity">
    <reaction evidence="1">
        <text>chenodeoxycholate(out) = chenodeoxycholate(in)</text>
        <dbReference type="Rhea" id="RHEA:75051"/>
        <dbReference type="ChEBI" id="CHEBI:36234"/>
    </reaction>
</comment>
<comment type="catalytic activity">
    <reaction evidence="1">
        <text>glycocholate(out) = glycocholate(in)</text>
        <dbReference type="Rhea" id="RHEA:71851"/>
        <dbReference type="ChEBI" id="CHEBI:29746"/>
    </reaction>
</comment>
<comment type="catalytic activity">
    <reaction evidence="1">
        <text>L-homoarginine(in) = L-homoarginine(out)</text>
        <dbReference type="Rhea" id="RHEA:71203"/>
        <dbReference type="ChEBI" id="CHEBI:143006"/>
    </reaction>
</comment>
<comment type="catalytic activity">
    <reaction evidence="1">
        <text>L-arginine(in) = L-arginine(out)</text>
        <dbReference type="Rhea" id="RHEA:32143"/>
        <dbReference type="ChEBI" id="CHEBI:32682"/>
    </reaction>
</comment>
<comment type="catalytic activity">
    <reaction evidence="1">
        <text>N(omega),N(omega)-dimethyl-L-arginine(out) = N(omega),N(omega)-dimethyl-L-arginine(in)</text>
        <dbReference type="Rhea" id="RHEA:75047"/>
        <dbReference type="ChEBI" id="CHEBI:58326"/>
    </reaction>
</comment>
<comment type="subcellular location">
    <subcellularLocation>
        <location evidence="2">Basolateral cell membrane</location>
        <topology evidence="2">Multi-pass membrane protein</topology>
    </subcellularLocation>
    <text evidence="2">Detected at the basolateral membrane of the proximal tubule cell in the kidney.</text>
</comment>
<comment type="tissue specificity">
    <text evidence="7">Strongly expressed in initial segment of epididymis and seminal vesicles.</text>
</comment>
<comment type="induction">
    <text evidence="7">Dramatically down-regulated 1 day after gonadectomy.</text>
</comment>
<comment type="similarity">
    <text evidence="3">Belongs to the organo anion transporter (TC 2.A.60) family.</text>
</comment>
<feature type="chain" id="PRO_0000337152" description="Solute carrier organic anion transporter family member 4C1">
    <location>
        <begin position="1"/>
        <end position="722"/>
    </location>
</feature>
<feature type="topological domain" description="Cytoplasmic" evidence="3">
    <location>
        <begin position="1"/>
        <end position="101"/>
    </location>
</feature>
<feature type="transmembrane region" description="Helical; Name=1" evidence="3">
    <location>
        <begin position="102"/>
        <end position="122"/>
    </location>
</feature>
<feature type="topological domain" description="Extracellular" evidence="3">
    <location>
        <begin position="123"/>
        <end position="141"/>
    </location>
</feature>
<feature type="transmembrane region" description="Helical; Name=2" evidence="3">
    <location>
        <begin position="142"/>
        <end position="162"/>
    </location>
</feature>
<feature type="topological domain" description="Cytoplasmic" evidence="3">
    <location>
        <begin position="163"/>
        <end position="168"/>
    </location>
</feature>
<feature type="transmembrane region" description="Helical; Name=3" evidence="3">
    <location>
        <begin position="169"/>
        <end position="193"/>
    </location>
</feature>
<feature type="topological domain" description="Extracellular" evidence="3">
    <location>
        <begin position="194"/>
        <end position="218"/>
    </location>
</feature>
<feature type="transmembrane region" description="Helical; Name=4" evidence="3">
    <location>
        <begin position="219"/>
        <end position="249"/>
    </location>
</feature>
<feature type="topological domain" description="Cytoplasmic" evidence="3">
    <location>
        <begin position="250"/>
        <end position="269"/>
    </location>
</feature>
<feature type="transmembrane region" description="Helical; Name=5" evidence="3">
    <location>
        <begin position="270"/>
        <end position="290"/>
    </location>
</feature>
<feature type="topological domain" description="Extracellular" evidence="3">
    <location>
        <begin position="291"/>
        <end position="306"/>
    </location>
</feature>
<feature type="transmembrane region" description="Helical; Name=6" evidence="3">
    <location>
        <begin position="307"/>
        <end position="331"/>
    </location>
</feature>
<feature type="topological domain" description="Cytoplasmic" evidence="3">
    <location>
        <begin position="332"/>
        <end position="376"/>
    </location>
</feature>
<feature type="transmembrane region" description="Helical; Name=7" evidence="3">
    <location>
        <begin position="377"/>
        <end position="398"/>
    </location>
</feature>
<feature type="topological domain" description="Extracellular" evidence="3">
    <location>
        <begin position="399"/>
        <end position="418"/>
    </location>
</feature>
<feature type="transmembrane region" description="Helical; Name=8" evidence="3">
    <location>
        <begin position="419"/>
        <end position="442"/>
    </location>
</feature>
<feature type="topological domain" description="Cytoplasmic" evidence="3">
    <location>
        <begin position="443"/>
        <end position="446"/>
    </location>
</feature>
<feature type="transmembrane region" description="Helical; Name=9" evidence="3">
    <location>
        <begin position="447"/>
        <end position="470"/>
    </location>
</feature>
<feature type="topological domain" description="Extracellular" evidence="3">
    <location>
        <begin position="471"/>
        <end position="578"/>
    </location>
</feature>
<feature type="transmembrane region" description="Helical; Name=10" evidence="3">
    <location>
        <begin position="579"/>
        <end position="601"/>
    </location>
</feature>
<feature type="topological domain" description="Cytoplasmic" evidence="3">
    <location>
        <begin position="602"/>
        <end position="610"/>
    </location>
</feature>
<feature type="transmembrane region" description="Helical; Name=11" evidence="3">
    <location>
        <begin position="611"/>
        <end position="636"/>
    </location>
</feature>
<feature type="topological domain" description="Extracellular" evidence="3">
    <location>
        <begin position="637"/>
        <end position="670"/>
    </location>
</feature>
<feature type="transmembrane region" description="Helical; Name=12" evidence="3">
    <location>
        <begin position="671"/>
        <end position="688"/>
    </location>
</feature>
<feature type="topological domain" description="Cytoplasmic" evidence="3">
    <location>
        <begin position="689"/>
        <end position="722"/>
    </location>
</feature>
<feature type="domain" description="Kazal-like" evidence="4">
    <location>
        <begin position="494"/>
        <end position="549"/>
    </location>
</feature>
<feature type="region of interest" description="Disordered" evidence="5">
    <location>
        <begin position="1"/>
        <end position="81"/>
    </location>
</feature>
<feature type="compositionally biased region" description="Polar residues" evidence="5">
    <location>
        <begin position="25"/>
        <end position="46"/>
    </location>
</feature>
<feature type="modified residue" description="Phosphoserine" evidence="2">
    <location>
        <position position="15"/>
    </location>
</feature>
<feature type="modified residue" description="Phosphoserine" evidence="15">
    <location>
        <position position="16"/>
    </location>
</feature>
<feature type="modified residue" description="Phosphothreonine" evidence="15">
    <location>
        <position position="19"/>
    </location>
</feature>
<feature type="modified residue" description="Phosphoserine" evidence="15">
    <location>
        <position position="24"/>
    </location>
</feature>
<feature type="modified residue" description="Phosphoserine" evidence="15">
    <location>
        <position position="26"/>
    </location>
</feature>
<feature type="modified residue" description="Phosphoserine" evidence="15">
    <location>
        <position position="28"/>
    </location>
</feature>
<feature type="disulfide bond" evidence="4">
    <location>
        <begin position="500"/>
        <end position="530"/>
    </location>
</feature>
<feature type="disulfide bond" evidence="4">
    <location>
        <begin position="506"/>
        <end position="526"/>
    </location>
</feature>
<feature type="disulfide bond" evidence="4">
    <location>
        <begin position="515"/>
        <end position="547"/>
    </location>
</feature>
<accession>Q8BGD4</accession>
<dbReference type="EMBL" id="AY654588">
    <property type="protein sequence ID" value="AAT73731.1"/>
    <property type="molecule type" value="mRNA"/>
</dbReference>
<dbReference type="EMBL" id="AK049253">
    <property type="protein sequence ID" value="BAC33637.1"/>
    <property type="molecule type" value="mRNA"/>
</dbReference>
<dbReference type="EMBL" id="AK049944">
    <property type="protein sequence ID" value="BAC33997.1"/>
    <property type="molecule type" value="mRNA"/>
</dbReference>
<dbReference type="EMBL" id="BC119022">
    <property type="protein sequence ID" value="AAI19023.1"/>
    <property type="molecule type" value="mRNA"/>
</dbReference>
<dbReference type="CCDS" id="CCDS35675.1"/>
<dbReference type="RefSeq" id="NP_766246.1">
    <property type="nucleotide sequence ID" value="NM_172658.3"/>
</dbReference>
<dbReference type="SMR" id="Q8BGD4"/>
<dbReference type="BioGRID" id="230624">
    <property type="interactions" value="1"/>
</dbReference>
<dbReference type="FunCoup" id="Q8BGD4">
    <property type="interactions" value="24"/>
</dbReference>
<dbReference type="STRING" id="10090.ENSMUSP00000071875"/>
<dbReference type="iPTMnet" id="Q8BGD4"/>
<dbReference type="PhosphoSitePlus" id="Q8BGD4"/>
<dbReference type="SwissPalm" id="Q8BGD4"/>
<dbReference type="jPOST" id="Q8BGD4"/>
<dbReference type="PaxDb" id="10090-ENSMUSP00000071875"/>
<dbReference type="ProteomicsDB" id="261473"/>
<dbReference type="Antibodypedia" id="48357">
    <property type="antibodies" value="69 antibodies from 17 providers"/>
</dbReference>
<dbReference type="DNASU" id="227394"/>
<dbReference type="Ensembl" id="ENSMUST00000071985.6">
    <property type="protein sequence ID" value="ENSMUSP00000071875.5"/>
    <property type="gene ID" value="ENSMUSG00000040693.8"/>
</dbReference>
<dbReference type="GeneID" id="227394"/>
<dbReference type="KEGG" id="mmu:227394"/>
<dbReference type="UCSC" id="uc007cfc.1">
    <property type="organism name" value="mouse"/>
</dbReference>
<dbReference type="AGR" id="MGI:2442784"/>
<dbReference type="CTD" id="353189"/>
<dbReference type="MGI" id="MGI:2442784">
    <property type="gene designation" value="Slco4c1"/>
</dbReference>
<dbReference type="VEuPathDB" id="HostDB:ENSMUSG00000040693"/>
<dbReference type="eggNOG" id="KOG3626">
    <property type="taxonomic scope" value="Eukaryota"/>
</dbReference>
<dbReference type="GeneTree" id="ENSGT01130000278287"/>
<dbReference type="HOGENOM" id="CLU_008954_1_2_1"/>
<dbReference type="InParanoid" id="Q8BGD4"/>
<dbReference type="OMA" id="KCENEPF"/>
<dbReference type="OrthoDB" id="5062115at2759"/>
<dbReference type="PhylomeDB" id="Q8BGD4"/>
<dbReference type="TreeFam" id="TF317540"/>
<dbReference type="Reactome" id="R-MMU-6798695">
    <property type="pathway name" value="Neutrophil degranulation"/>
</dbReference>
<dbReference type="Reactome" id="R-MMU-879518">
    <property type="pathway name" value="Transport of organic anions"/>
</dbReference>
<dbReference type="BioGRID-ORCS" id="227394">
    <property type="hits" value="0 hits in 76 CRISPR screens"/>
</dbReference>
<dbReference type="ChiTaRS" id="Slco4c1">
    <property type="organism name" value="mouse"/>
</dbReference>
<dbReference type="PRO" id="PR:Q8BGD4"/>
<dbReference type="Proteomes" id="UP000000589">
    <property type="component" value="Chromosome 1"/>
</dbReference>
<dbReference type="RNAct" id="Q8BGD4">
    <property type="molecule type" value="protein"/>
</dbReference>
<dbReference type="Bgee" id="ENSMUSG00000040693">
    <property type="expression patterns" value="Expressed in seminal vesicle and 106 other cell types or tissues"/>
</dbReference>
<dbReference type="GO" id="GO:0016323">
    <property type="term" value="C:basolateral plasma membrane"/>
    <property type="evidence" value="ECO:0000266"/>
    <property type="project" value="MGI"/>
</dbReference>
<dbReference type="GO" id="GO:0008514">
    <property type="term" value="F:organic anion transmembrane transporter activity"/>
    <property type="evidence" value="ECO:0000250"/>
    <property type="project" value="UniProtKB"/>
</dbReference>
<dbReference type="GO" id="GO:0030154">
    <property type="term" value="P:cell differentiation"/>
    <property type="evidence" value="ECO:0007669"/>
    <property type="project" value="UniProtKB-KW"/>
</dbReference>
<dbReference type="GO" id="GO:0006811">
    <property type="term" value="P:monoatomic ion transport"/>
    <property type="evidence" value="ECO:0007669"/>
    <property type="project" value="UniProtKB-KW"/>
</dbReference>
<dbReference type="GO" id="GO:0015711">
    <property type="term" value="P:organic anion transport"/>
    <property type="evidence" value="ECO:0000266"/>
    <property type="project" value="MGI"/>
</dbReference>
<dbReference type="GO" id="GO:0007283">
    <property type="term" value="P:spermatogenesis"/>
    <property type="evidence" value="ECO:0007669"/>
    <property type="project" value="UniProtKB-KW"/>
</dbReference>
<dbReference type="CDD" id="cd17463">
    <property type="entry name" value="MFS_SLCO4C_OATP4C"/>
    <property type="match status" value="1"/>
</dbReference>
<dbReference type="Gene3D" id="1.20.1250.20">
    <property type="entry name" value="MFS general substrate transporter like domains"/>
    <property type="match status" value="1"/>
</dbReference>
<dbReference type="InterPro" id="IPR002350">
    <property type="entry name" value="Kazal_dom"/>
</dbReference>
<dbReference type="InterPro" id="IPR036058">
    <property type="entry name" value="Kazal_dom_sf"/>
</dbReference>
<dbReference type="InterPro" id="IPR020846">
    <property type="entry name" value="MFS_dom"/>
</dbReference>
<dbReference type="InterPro" id="IPR036259">
    <property type="entry name" value="MFS_trans_sf"/>
</dbReference>
<dbReference type="InterPro" id="IPR004156">
    <property type="entry name" value="OATP"/>
</dbReference>
<dbReference type="NCBIfam" id="TIGR00805">
    <property type="entry name" value="oat"/>
    <property type="match status" value="1"/>
</dbReference>
<dbReference type="PANTHER" id="PTHR11388">
    <property type="entry name" value="ORGANIC ANION TRANSPORTER"/>
    <property type="match status" value="1"/>
</dbReference>
<dbReference type="PANTHER" id="PTHR11388:SF103">
    <property type="entry name" value="SOLUTE CARRIER ORGANIC ANION TRANSPORTER FAMILY MEMBER 4C1"/>
    <property type="match status" value="1"/>
</dbReference>
<dbReference type="Pfam" id="PF07648">
    <property type="entry name" value="Kazal_2"/>
    <property type="match status" value="1"/>
</dbReference>
<dbReference type="Pfam" id="PF03137">
    <property type="entry name" value="OATP"/>
    <property type="match status" value="1"/>
</dbReference>
<dbReference type="SUPFAM" id="SSF100895">
    <property type="entry name" value="Kazal-type serine protease inhibitors"/>
    <property type="match status" value="1"/>
</dbReference>
<dbReference type="SUPFAM" id="SSF103473">
    <property type="entry name" value="MFS general substrate transporter"/>
    <property type="match status" value="1"/>
</dbReference>
<dbReference type="PROSITE" id="PS51465">
    <property type="entry name" value="KAZAL_2"/>
    <property type="match status" value="1"/>
</dbReference>
<dbReference type="PROSITE" id="PS50850">
    <property type="entry name" value="MFS"/>
    <property type="match status" value="1"/>
</dbReference>
<gene>
    <name evidence="14" type="primary">Slco4c1</name>
    <name evidence="1" type="synonym">Oatp4c1</name>
    <name evidence="1" type="synonym">Slc21a20</name>
</gene>
<evidence type="ECO:0000250" key="1">
    <source>
        <dbReference type="UniProtKB" id="Q6ZQN7"/>
    </source>
</evidence>
<evidence type="ECO:0000250" key="2">
    <source>
        <dbReference type="UniProtKB" id="Q71MB6"/>
    </source>
</evidence>
<evidence type="ECO:0000255" key="3"/>
<evidence type="ECO:0000255" key="4">
    <source>
        <dbReference type="PROSITE-ProRule" id="PRU00798"/>
    </source>
</evidence>
<evidence type="ECO:0000256" key="5">
    <source>
        <dbReference type="SAM" id="MobiDB-lite"/>
    </source>
</evidence>
<evidence type="ECO:0000269" key="6">
    <source>
    </source>
</evidence>
<evidence type="ECO:0000269" key="7">
    <source>
    </source>
</evidence>
<evidence type="ECO:0000303" key="8">
    <source>
    </source>
</evidence>
<evidence type="ECO:0000305" key="9"/>
<evidence type="ECO:0000312" key="10">
    <source>
        <dbReference type="EMBL" id="AAI19023.1"/>
    </source>
</evidence>
<evidence type="ECO:0000312" key="11">
    <source>
        <dbReference type="EMBL" id="AAT73731.1"/>
    </source>
</evidence>
<evidence type="ECO:0000312" key="12">
    <source>
        <dbReference type="EMBL" id="BAC33637.1"/>
    </source>
</evidence>
<evidence type="ECO:0000312" key="13">
    <source>
        <dbReference type="EMBL" id="BAC33997.1"/>
    </source>
</evidence>
<evidence type="ECO:0000312" key="14">
    <source>
        <dbReference type="MGI" id="MGI:2442784"/>
    </source>
</evidence>
<evidence type="ECO:0007744" key="15">
    <source>
    </source>
</evidence>